<proteinExistence type="predicted"/>
<gene>
    <name type="ORF">IIV6-420R</name>
</gene>
<organismHost>
    <name type="scientific">Acheta domesticus</name>
    <name type="common">House cricket</name>
    <dbReference type="NCBI Taxonomy" id="6997"/>
</organismHost>
<organismHost>
    <name type="scientific">Chilo suppressalis</name>
    <name type="common">Asiatic rice borer moth</name>
    <dbReference type="NCBI Taxonomy" id="168631"/>
</organismHost>
<organismHost>
    <name type="scientific">Gryllus bimaculatus</name>
    <name type="common">Two-spotted cricket</name>
    <dbReference type="NCBI Taxonomy" id="6999"/>
</organismHost>
<organismHost>
    <name type="scientific">Gryllus campestris</name>
    <dbReference type="NCBI Taxonomy" id="58607"/>
</organismHost>
<organismHost>
    <name type="scientific">Spodoptera frugiperda</name>
    <name type="common">Fall armyworm</name>
    <dbReference type="NCBI Taxonomy" id="7108"/>
</organismHost>
<keyword id="KW-0175">Coiled coil</keyword>
<keyword id="KW-1185">Reference proteome</keyword>
<protein>
    <recommendedName>
        <fullName>Putative MSV199 domain-containing protein 420R</fullName>
    </recommendedName>
</protein>
<dbReference type="EMBL" id="AF303741">
    <property type="protein sequence ID" value="AAK82280.1"/>
    <property type="molecule type" value="Genomic_DNA"/>
</dbReference>
<dbReference type="RefSeq" id="NP_149883.1">
    <property type="nucleotide sequence ID" value="NC_003038.1"/>
</dbReference>
<dbReference type="SMR" id="Q91FA5"/>
<dbReference type="KEGG" id="vg:1733138"/>
<dbReference type="OrthoDB" id="5801at10239"/>
<dbReference type="Proteomes" id="UP000001359">
    <property type="component" value="Genome"/>
</dbReference>
<dbReference type="InterPro" id="IPR018879">
    <property type="entry name" value="MSV199_dom"/>
</dbReference>
<dbReference type="InterPro" id="IPR018306">
    <property type="entry name" value="Phage_T5_Orf172_DNA-bd"/>
</dbReference>
<dbReference type="Pfam" id="PF10553">
    <property type="entry name" value="MSV199"/>
    <property type="match status" value="1"/>
</dbReference>
<dbReference type="Pfam" id="PF10544">
    <property type="entry name" value="T5orf172"/>
    <property type="match status" value="1"/>
</dbReference>
<name>420R_IIV6</name>
<feature type="chain" id="PRO_0000377886" description="Putative MSV199 domain-containing protein 420R">
    <location>
        <begin position="1"/>
        <end position="447"/>
    </location>
</feature>
<feature type="coiled-coil region" evidence="1">
    <location>
        <begin position="188"/>
        <end position="221"/>
    </location>
</feature>
<reference key="1">
    <citation type="journal article" date="2001" name="Virology">
        <title>Analysis of the first complete DNA sequence of an invertebrate iridovirus: coding strategy of the genome of Chilo iridescent virus.</title>
        <authorList>
            <person name="Jakob N.J."/>
            <person name="Mueller K."/>
            <person name="Bahr U."/>
            <person name="Darai G."/>
        </authorList>
    </citation>
    <scope>NUCLEOTIDE SEQUENCE [LARGE SCALE GENOMIC DNA]</scope>
</reference>
<reference key="2">
    <citation type="journal article" date="2007" name="Virol. J.">
        <title>Comparative genomic analysis of the family Iridoviridae: re-annotating and defining the core set of iridovirus genes.</title>
        <authorList>
            <person name="Eaton H.E."/>
            <person name="Metcalf J."/>
            <person name="Penny E."/>
            <person name="Tcherepanov V."/>
            <person name="Upton C."/>
            <person name="Brunetti C.R."/>
        </authorList>
    </citation>
    <scope>GENOME REANNOTATION</scope>
</reference>
<sequence length="447" mass="53472">MEVAMTDLFTYIKDKNIAIDLNSKWFQELWYPLSKKTGSIITTRLLEWMGYSGEYKLQRQNFKRLLDNNNIPYEEIYHNDDRFLEHPSMIYEIEQTDKKQIKQKRWITLEMRNFKKAILRLNTKNAEVIRDYYLNLEEACFDYAEYQVNWLRKKSDLERSINEDKLNQSMLLLAIKDEELESEKEKGIQTRSMLKKVEEEKIKIENEKEKALRKMLRLKEITITQKERTITQLIYISTSVSYAAQHRFKVGGVEGRRRLRGRLSDYNGRSASGDEWYFCHLIDVADFRKAEGRIEDIIGKFRDKKDKEIYIMPYRKLLKVIELICQNYTIEVSTLNAMLKDIVDEFEDDAVPLIPDAIPQSTFKITRVEFGKNVDTTIIQGKATKAQLIKEFEKYIQTLSVDENEINRKELFDDLSRLYNFNRNDAWVWLKEFIESQEEKTFILKYR</sequence>
<organism>
    <name type="scientific">Invertebrate iridescent virus 6</name>
    <name type="common">IIV-6</name>
    <name type="synonym">Chilo iridescent virus</name>
    <dbReference type="NCBI Taxonomy" id="176652"/>
    <lineage>
        <taxon>Viruses</taxon>
        <taxon>Varidnaviria</taxon>
        <taxon>Bamfordvirae</taxon>
        <taxon>Nucleocytoviricota</taxon>
        <taxon>Megaviricetes</taxon>
        <taxon>Pimascovirales</taxon>
        <taxon>Iridoviridae</taxon>
        <taxon>Betairidovirinae</taxon>
        <taxon>Iridovirus</taxon>
    </lineage>
</organism>
<accession>Q91FA5</accession>
<evidence type="ECO:0000255" key="1"/>